<organism>
    <name type="scientific">Dictyostelium discoideum</name>
    <name type="common">Social amoeba</name>
    <dbReference type="NCBI Taxonomy" id="44689"/>
    <lineage>
        <taxon>Eukaryota</taxon>
        <taxon>Amoebozoa</taxon>
        <taxon>Evosea</taxon>
        <taxon>Eumycetozoa</taxon>
        <taxon>Dictyostelia</taxon>
        <taxon>Dictyosteliales</taxon>
        <taxon>Dictyosteliaceae</taxon>
        <taxon>Dictyostelium</taxon>
    </lineage>
</organism>
<gene>
    <name type="primary">sir2C</name>
    <name type="ORF">DDB_G0284795</name>
</gene>
<proteinExistence type="evidence at transcript level"/>
<keyword id="KW-0479">Metal-binding</keyword>
<keyword id="KW-0520">NAD</keyword>
<keyword id="KW-1185">Reference proteome</keyword>
<keyword id="KW-0808">Transferase</keyword>
<keyword id="KW-0862">Zinc</keyword>
<dbReference type="EC" id="2.3.1.286" evidence="2"/>
<dbReference type="EMBL" id="AAFI02000071">
    <property type="protein sequence ID" value="EAL65050.1"/>
    <property type="molecule type" value="Genomic_DNA"/>
</dbReference>
<dbReference type="RefSeq" id="XP_638409.1">
    <property type="nucleotide sequence ID" value="XM_633317.1"/>
</dbReference>
<dbReference type="SMR" id="Q54P49"/>
<dbReference type="FunCoup" id="Q54P49">
    <property type="interactions" value="273"/>
</dbReference>
<dbReference type="STRING" id="44689.Q54P49"/>
<dbReference type="PaxDb" id="44689-DDB0216433"/>
<dbReference type="EnsemblProtists" id="EAL65050">
    <property type="protein sequence ID" value="EAL65050"/>
    <property type="gene ID" value="DDB_G0284795"/>
</dbReference>
<dbReference type="GeneID" id="8624779"/>
<dbReference type="KEGG" id="ddi:DDB_G0284795"/>
<dbReference type="dictyBase" id="DDB_G0284795">
    <property type="gene designation" value="sir2C"/>
</dbReference>
<dbReference type="VEuPathDB" id="AmoebaDB:DDB_G0284795"/>
<dbReference type="eggNOG" id="KOG2682">
    <property type="taxonomic scope" value="Eukaryota"/>
</dbReference>
<dbReference type="HOGENOM" id="CLU_600549_0_0_1"/>
<dbReference type="InParanoid" id="Q54P49"/>
<dbReference type="OMA" id="HIENCNI"/>
<dbReference type="PhylomeDB" id="Q54P49"/>
<dbReference type="Reactome" id="R-DDI-2151201">
    <property type="pathway name" value="Transcriptional activation of mitochondrial biogenesis"/>
</dbReference>
<dbReference type="PRO" id="PR:Q54P49"/>
<dbReference type="Proteomes" id="UP000002195">
    <property type="component" value="Chromosome 4"/>
</dbReference>
<dbReference type="GO" id="GO:0005634">
    <property type="term" value="C:nucleus"/>
    <property type="evidence" value="ECO:0000318"/>
    <property type="project" value="GO_Central"/>
</dbReference>
<dbReference type="GO" id="GO:0017136">
    <property type="term" value="F:histone deacetylase activity, NAD-dependent"/>
    <property type="evidence" value="ECO:0000318"/>
    <property type="project" value="GO_Central"/>
</dbReference>
<dbReference type="GO" id="GO:0046872">
    <property type="term" value="F:metal ion binding"/>
    <property type="evidence" value="ECO:0007669"/>
    <property type="project" value="UniProtKB-KW"/>
</dbReference>
<dbReference type="GO" id="GO:0070403">
    <property type="term" value="F:NAD+ binding"/>
    <property type="evidence" value="ECO:0000318"/>
    <property type="project" value="GO_Central"/>
</dbReference>
<dbReference type="GO" id="GO:0000183">
    <property type="term" value="P:rDNA heterochromatin formation"/>
    <property type="evidence" value="ECO:0000318"/>
    <property type="project" value="GO_Central"/>
</dbReference>
<dbReference type="Gene3D" id="3.30.1600.10">
    <property type="entry name" value="SIR2/SIRT2 'Small Domain"/>
    <property type="match status" value="1"/>
</dbReference>
<dbReference type="Gene3D" id="3.40.50.1220">
    <property type="entry name" value="TPP-binding domain"/>
    <property type="match status" value="1"/>
</dbReference>
<dbReference type="Gene3D" id="3.30.40.10">
    <property type="entry name" value="Zinc/RING finger domain, C3HC4 (zinc finger)"/>
    <property type="match status" value="1"/>
</dbReference>
<dbReference type="InterPro" id="IPR029035">
    <property type="entry name" value="DHS-like_NAD/FAD-binding_dom"/>
</dbReference>
<dbReference type="InterPro" id="IPR050134">
    <property type="entry name" value="NAD-dep_sirtuin_deacylases"/>
</dbReference>
<dbReference type="InterPro" id="IPR003000">
    <property type="entry name" value="Sirtuin"/>
</dbReference>
<dbReference type="InterPro" id="IPR026591">
    <property type="entry name" value="Sirtuin_cat_small_dom_sf"/>
</dbReference>
<dbReference type="InterPro" id="IPR026590">
    <property type="entry name" value="Ssirtuin_cat_dom"/>
</dbReference>
<dbReference type="InterPro" id="IPR013083">
    <property type="entry name" value="Znf_RING/FYVE/PHD"/>
</dbReference>
<dbReference type="PANTHER" id="PTHR11085:SF6">
    <property type="entry name" value="NAD-DEPENDENT PROTEIN DEACETYLASE SIRTUIN-2"/>
    <property type="match status" value="1"/>
</dbReference>
<dbReference type="PANTHER" id="PTHR11085">
    <property type="entry name" value="NAD-DEPENDENT PROTEIN DEACYLASE SIRTUIN-5, MITOCHONDRIAL-RELATED"/>
    <property type="match status" value="1"/>
</dbReference>
<dbReference type="Pfam" id="PF02146">
    <property type="entry name" value="SIR2"/>
    <property type="match status" value="1"/>
</dbReference>
<dbReference type="SUPFAM" id="SSF52467">
    <property type="entry name" value="DHS-like NAD/FAD-binding domain"/>
    <property type="match status" value="1"/>
</dbReference>
<dbReference type="PROSITE" id="PS50305">
    <property type="entry name" value="SIRTUIN"/>
    <property type="match status" value="1"/>
</dbReference>
<feature type="chain" id="PRO_0000393127" description="NAD-dependent deacetylase sir2C">
    <location>
        <begin position="1"/>
        <end position="456"/>
    </location>
</feature>
<feature type="domain" description="Deacetylase sirtuin-type" evidence="2">
    <location>
        <begin position="161"/>
        <end position="443"/>
    </location>
</feature>
<feature type="active site" description="Proton acceptor" evidence="2">
    <location>
        <position position="294"/>
    </location>
</feature>
<feature type="binding site" evidence="2">
    <location>
        <position position="302"/>
    </location>
    <ligand>
        <name>Zn(2+)</name>
        <dbReference type="ChEBI" id="CHEBI:29105"/>
    </ligand>
</feature>
<feature type="binding site" evidence="2">
    <location>
        <position position="305"/>
    </location>
    <ligand>
        <name>Zn(2+)</name>
        <dbReference type="ChEBI" id="CHEBI:29105"/>
    </ligand>
</feature>
<feature type="binding site" evidence="2">
    <location>
        <position position="331"/>
    </location>
    <ligand>
        <name>Zn(2+)</name>
        <dbReference type="ChEBI" id="CHEBI:29105"/>
    </ligand>
</feature>
<feature type="binding site" evidence="2">
    <location>
        <position position="336"/>
    </location>
    <ligand>
        <name>Zn(2+)</name>
        <dbReference type="ChEBI" id="CHEBI:29105"/>
    </ligand>
</feature>
<accession>Q54P49</accession>
<reference key="1">
    <citation type="journal article" date="2005" name="Nature">
        <title>The genome of the social amoeba Dictyostelium discoideum.</title>
        <authorList>
            <person name="Eichinger L."/>
            <person name="Pachebat J.A."/>
            <person name="Gloeckner G."/>
            <person name="Rajandream M.A."/>
            <person name="Sucgang R."/>
            <person name="Berriman M."/>
            <person name="Song J."/>
            <person name="Olsen R."/>
            <person name="Szafranski K."/>
            <person name="Xu Q."/>
            <person name="Tunggal B."/>
            <person name="Kummerfeld S."/>
            <person name="Madera M."/>
            <person name="Konfortov B.A."/>
            <person name="Rivero F."/>
            <person name="Bankier A.T."/>
            <person name="Lehmann R."/>
            <person name="Hamlin N."/>
            <person name="Davies R."/>
            <person name="Gaudet P."/>
            <person name="Fey P."/>
            <person name="Pilcher K."/>
            <person name="Chen G."/>
            <person name="Saunders D."/>
            <person name="Sodergren E.J."/>
            <person name="Davis P."/>
            <person name="Kerhornou A."/>
            <person name="Nie X."/>
            <person name="Hall N."/>
            <person name="Anjard C."/>
            <person name="Hemphill L."/>
            <person name="Bason N."/>
            <person name="Farbrother P."/>
            <person name="Desany B."/>
            <person name="Just E."/>
            <person name="Morio T."/>
            <person name="Rost R."/>
            <person name="Churcher C.M."/>
            <person name="Cooper J."/>
            <person name="Haydock S."/>
            <person name="van Driessche N."/>
            <person name="Cronin A."/>
            <person name="Goodhead I."/>
            <person name="Muzny D.M."/>
            <person name="Mourier T."/>
            <person name="Pain A."/>
            <person name="Lu M."/>
            <person name="Harper D."/>
            <person name="Lindsay R."/>
            <person name="Hauser H."/>
            <person name="James K.D."/>
            <person name="Quiles M."/>
            <person name="Madan Babu M."/>
            <person name="Saito T."/>
            <person name="Buchrieser C."/>
            <person name="Wardroper A."/>
            <person name="Felder M."/>
            <person name="Thangavelu M."/>
            <person name="Johnson D."/>
            <person name="Knights A."/>
            <person name="Loulseged H."/>
            <person name="Mungall K.L."/>
            <person name="Oliver K."/>
            <person name="Price C."/>
            <person name="Quail M.A."/>
            <person name="Urushihara H."/>
            <person name="Hernandez J."/>
            <person name="Rabbinowitsch E."/>
            <person name="Steffen D."/>
            <person name="Sanders M."/>
            <person name="Ma J."/>
            <person name="Kohara Y."/>
            <person name="Sharp S."/>
            <person name="Simmonds M.N."/>
            <person name="Spiegler S."/>
            <person name="Tivey A."/>
            <person name="Sugano S."/>
            <person name="White B."/>
            <person name="Walker D."/>
            <person name="Woodward J.R."/>
            <person name="Winckler T."/>
            <person name="Tanaka Y."/>
            <person name="Shaulsky G."/>
            <person name="Schleicher M."/>
            <person name="Weinstock G.M."/>
            <person name="Rosenthal A."/>
            <person name="Cox E.C."/>
            <person name="Chisholm R.L."/>
            <person name="Gibbs R.A."/>
            <person name="Loomis W.F."/>
            <person name="Platzer M."/>
            <person name="Kay R.R."/>
            <person name="Williams J.G."/>
            <person name="Dear P.H."/>
            <person name="Noegel A.A."/>
            <person name="Barrell B.G."/>
            <person name="Kuspa A."/>
        </authorList>
    </citation>
    <scope>NUCLEOTIDE SEQUENCE [LARGE SCALE GENOMIC DNA]</scope>
    <source>
        <strain>AX4</strain>
    </source>
</reference>
<reference key="2">
    <citation type="journal article" date="2008" name="Microbes Environ.">
        <title>Developmental and spatial expression of sir2 genes in the cellular slime mold Dictyostelium discoideum.</title>
        <authorList>
            <person name="Katayama T."/>
            <person name="Yasukawa H."/>
        </authorList>
    </citation>
    <scope>DEVELOPMENTAL STAGE</scope>
</reference>
<protein>
    <recommendedName>
        <fullName>NAD-dependent deacetylase sir2C</fullName>
        <ecNumber evidence="2">2.3.1.286</ecNumber>
    </recommendedName>
    <alternativeName>
        <fullName>Silent information regulator sir2C</fullName>
    </alternativeName>
</protein>
<sequence length="456" mass="52428">MSKQTQCVHIENCNINYESIDIQLYDNENITIPNCYKCSSQDNILICLECGIVVCMEDCKLHSNHSIFKIFHGDDKTLWCNDCNELIKESTMIEKCTKNSDLINKKLKDIENLFKVMKLFIYYDQRNLKYNKNFDSIDNSIKDIIKNSNIIKNEIKIENEIEIENNKIKEFIKLIKNDKCKNIIVLTGAGISVASGIPDFRSVETGLYNNENVSKFKLPFKEAVFDIDYFKFNPEPFYQLSKDLYPSGKFKCTPVHYFIKLLSDKGLLLRNYAQNADTLERIAGIPLDKLIEAHGSFAVSRCTNCGLEYSQEYIKDSIFNNDPLKSVVPRCKVVQCNNAVIKPDIVFFGESLPPIFNQNILDDINRCDCLIVIGTSLKVQPIASMVHFFPHFKNIPRLLINNQIVGENSFGGFNFNNNKNFDFKMIGDCQESVLNLSKLLNWDTELLNLINSKNHN</sequence>
<evidence type="ECO:0000250" key="1"/>
<evidence type="ECO:0000255" key="2">
    <source>
        <dbReference type="PROSITE-ProRule" id="PRU00236"/>
    </source>
</evidence>
<evidence type="ECO:0000269" key="3">
    <source ref="2"/>
</evidence>
<evidence type="ECO:0000305" key="4"/>
<comment type="function">
    <text evidence="1">NAD-dependent deacetylase, which plays an important role in the regulation of transcriptional repression.</text>
</comment>
<comment type="catalytic activity">
    <reaction evidence="2">
        <text>N(6)-acetyl-L-lysyl-[protein] + NAD(+) + H2O = 2''-O-acetyl-ADP-D-ribose + nicotinamide + L-lysyl-[protein]</text>
        <dbReference type="Rhea" id="RHEA:43636"/>
        <dbReference type="Rhea" id="RHEA-COMP:9752"/>
        <dbReference type="Rhea" id="RHEA-COMP:10731"/>
        <dbReference type="ChEBI" id="CHEBI:15377"/>
        <dbReference type="ChEBI" id="CHEBI:17154"/>
        <dbReference type="ChEBI" id="CHEBI:29969"/>
        <dbReference type="ChEBI" id="CHEBI:57540"/>
        <dbReference type="ChEBI" id="CHEBI:61930"/>
        <dbReference type="ChEBI" id="CHEBI:83767"/>
        <dbReference type="EC" id="2.3.1.286"/>
    </reaction>
</comment>
<comment type="cofactor">
    <cofactor evidence="1">
        <name>Zn(2+)</name>
        <dbReference type="ChEBI" id="CHEBI:29105"/>
    </cofactor>
    <text evidence="1">Binds 1 zinc ion per subunit.</text>
</comment>
<comment type="developmental stage">
    <text evidence="3">Expressed at high levels in growing cells, but at decreased levels in developing cells. Expressed in both prestalk and prespore cells.</text>
</comment>
<comment type="similarity">
    <text evidence="4">Belongs to the sirtuin family.</text>
</comment>
<name>SIR2C_DICDI</name>